<gene>
    <name evidence="1" type="primary">norR</name>
    <name type="ordered locus">SPAB_03530</name>
</gene>
<reference key="1">
    <citation type="submission" date="2007-11" db="EMBL/GenBank/DDBJ databases">
        <authorList>
            <consortium name="The Salmonella enterica serovar Paratyphi B Genome Sequencing Project"/>
            <person name="McClelland M."/>
            <person name="Sanderson E.K."/>
            <person name="Porwollik S."/>
            <person name="Spieth J."/>
            <person name="Clifton W.S."/>
            <person name="Fulton R."/>
            <person name="Cordes M."/>
            <person name="Wollam A."/>
            <person name="Shah N."/>
            <person name="Pepin K."/>
            <person name="Bhonagiri V."/>
            <person name="Nash W."/>
            <person name="Johnson M."/>
            <person name="Thiruvilangam P."/>
            <person name="Wilson R."/>
        </authorList>
    </citation>
    <scope>NUCLEOTIDE SEQUENCE [LARGE SCALE GENOMIC DNA]</scope>
    <source>
        <strain>ATCC BAA-1250 / SPB7</strain>
    </source>
</reference>
<dbReference type="EMBL" id="CP000886">
    <property type="protein sequence ID" value="ABX68871.1"/>
    <property type="molecule type" value="Genomic_DNA"/>
</dbReference>
<dbReference type="RefSeq" id="WP_000010816.1">
    <property type="nucleotide sequence ID" value="NC_010102.1"/>
</dbReference>
<dbReference type="SMR" id="A9N0D7"/>
<dbReference type="KEGG" id="spq:SPAB_03530"/>
<dbReference type="PATRIC" id="fig|1016998.12.peg.3323"/>
<dbReference type="HOGENOM" id="CLU_000445_125_2_6"/>
<dbReference type="BioCyc" id="SENT1016998:SPAB_RS14380-MONOMER"/>
<dbReference type="UniPathway" id="UPA00638"/>
<dbReference type="Proteomes" id="UP000008556">
    <property type="component" value="Chromosome"/>
</dbReference>
<dbReference type="GO" id="GO:0005524">
    <property type="term" value="F:ATP binding"/>
    <property type="evidence" value="ECO:0007669"/>
    <property type="project" value="UniProtKB-UniRule"/>
</dbReference>
<dbReference type="GO" id="GO:0016887">
    <property type="term" value="F:ATP hydrolysis activity"/>
    <property type="evidence" value="ECO:0007669"/>
    <property type="project" value="InterPro"/>
</dbReference>
<dbReference type="GO" id="GO:0003677">
    <property type="term" value="F:DNA binding"/>
    <property type="evidence" value="ECO:0007669"/>
    <property type="project" value="UniProtKB-KW"/>
</dbReference>
<dbReference type="GO" id="GO:0003700">
    <property type="term" value="F:DNA-binding transcription factor activity"/>
    <property type="evidence" value="ECO:0007669"/>
    <property type="project" value="UniProtKB-UniRule"/>
</dbReference>
<dbReference type="GO" id="GO:0000160">
    <property type="term" value="P:phosphorelay signal transduction system"/>
    <property type="evidence" value="ECO:0007669"/>
    <property type="project" value="UniProtKB-UniRule"/>
</dbReference>
<dbReference type="CDD" id="cd00009">
    <property type="entry name" value="AAA"/>
    <property type="match status" value="1"/>
</dbReference>
<dbReference type="FunFam" id="1.10.8.60:FF:000045">
    <property type="entry name" value="Anaerobic nitric oxide reductase transcription regulator NorR"/>
    <property type="match status" value="1"/>
</dbReference>
<dbReference type="FunFam" id="3.30.450.40:FF:000021">
    <property type="entry name" value="Anaerobic nitric oxide reductase transcription regulator NorR"/>
    <property type="match status" value="1"/>
</dbReference>
<dbReference type="FunFam" id="3.40.50.300:FF:000006">
    <property type="entry name" value="DNA-binding transcriptional regulator NtrC"/>
    <property type="match status" value="1"/>
</dbReference>
<dbReference type="Gene3D" id="1.10.8.60">
    <property type="match status" value="1"/>
</dbReference>
<dbReference type="Gene3D" id="3.30.450.40">
    <property type="match status" value="1"/>
</dbReference>
<dbReference type="Gene3D" id="1.10.10.60">
    <property type="entry name" value="Homeodomain-like"/>
    <property type="match status" value="1"/>
</dbReference>
<dbReference type="Gene3D" id="3.40.50.300">
    <property type="entry name" value="P-loop containing nucleotide triphosphate hydrolases"/>
    <property type="match status" value="1"/>
</dbReference>
<dbReference type="HAMAP" id="MF_01314">
    <property type="entry name" value="NorR"/>
    <property type="match status" value="1"/>
</dbReference>
<dbReference type="InterPro" id="IPR003593">
    <property type="entry name" value="AAA+_ATPase"/>
</dbReference>
<dbReference type="InterPro" id="IPR003018">
    <property type="entry name" value="GAF"/>
</dbReference>
<dbReference type="InterPro" id="IPR029016">
    <property type="entry name" value="GAF-like_dom_sf"/>
</dbReference>
<dbReference type="InterPro" id="IPR009057">
    <property type="entry name" value="Homeodomain-like_sf"/>
</dbReference>
<dbReference type="InterPro" id="IPR023944">
    <property type="entry name" value="NorR"/>
</dbReference>
<dbReference type="InterPro" id="IPR027417">
    <property type="entry name" value="P-loop_NTPase"/>
</dbReference>
<dbReference type="InterPro" id="IPR002078">
    <property type="entry name" value="Sigma_54_int"/>
</dbReference>
<dbReference type="InterPro" id="IPR025662">
    <property type="entry name" value="Sigma_54_int_dom_ATP-bd_1"/>
</dbReference>
<dbReference type="InterPro" id="IPR025943">
    <property type="entry name" value="Sigma_54_int_dom_ATP-bd_2"/>
</dbReference>
<dbReference type="InterPro" id="IPR025944">
    <property type="entry name" value="Sigma_54_int_dom_CS"/>
</dbReference>
<dbReference type="NCBIfam" id="NF003451">
    <property type="entry name" value="PRK05022.1"/>
    <property type="match status" value="1"/>
</dbReference>
<dbReference type="PANTHER" id="PTHR32071:SF35">
    <property type="entry name" value="ANAEROBIC NITRIC OXIDE REDUCTASE TRANSCRIPTION REGULATOR NORR"/>
    <property type="match status" value="1"/>
</dbReference>
<dbReference type="PANTHER" id="PTHR32071">
    <property type="entry name" value="TRANSCRIPTIONAL REGULATORY PROTEIN"/>
    <property type="match status" value="1"/>
</dbReference>
<dbReference type="Pfam" id="PF01590">
    <property type="entry name" value="GAF"/>
    <property type="match status" value="1"/>
</dbReference>
<dbReference type="Pfam" id="PF00158">
    <property type="entry name" value="Sigma54_activat"/>
    <property type="match status" value="1"/>
</dbReference>
<dbReference type="SMART" id="SM00382">
    <property type="entry name" value="AAA"/>
    <property type="match status" value="1"/>
</dbReference>
<dbReference type="SMART" id="SM00065">
    <property type="entry name" value="GAF"/>
    <property type="match status" value="1"/>
</dbReference>
<dbReference type="SUPFAM" id="SSF55781">
    <property type="entry name" value="GAF domain-like"/>
    <property type="match status" value="1"/>
</dbReference>
<dbReference type="SUPFAM" id="SSF46689">
    <property type="entry name" value="Homeodomain-like"/>
    <property type="match status" value="1"/>
</dbReference>
<dbReference type="SUPFAM" id="SSF52540">
    <property type="entry name" value="P-loop containing nucleoside triphosphate hydrolases"/>
    <property type="match status" value="1"/>
</dbReference>
<dbReference type="PROSITE" id="PS00675">
    <property type="entry name" value="SIGMA54_INTERACT_1"/>
    <property type="match status" value="1"/>
</dbReference>
<dbReference type="PROSITE" id="PS00676">
    <property type="entry name" value="SIGMA54_INTERACT_2"/>
    <property type="match status" value="1"/>
</dbReference>
<dbReference type="PROSITE" id="PS00688">
    <property type="entry name" value="SIGMA54_INTERACT_3"/>
    <property type="match status" value="1"/>
</dbReference>
<dbReference type="PROSITE" id="PS50045">
    <property type="entry name" value="SIGMA54_INTERACT_4"/>
    <property type="match status" value="1"/>
</dbReference>
<organism>
    <name type="scientific">Salmonella paratyphi B (strain ATCC BAA-1250 / SPB7)</name>
    <dbReference type="NCBI Taxonomy" id="1016998"/>
    <lineage>
        <taxon>Bacteria</taxon>
        <taxon>Pseudomonadati</taxon>
        <taxon>Pseudomonadota</taxon>
        <taxon>Gammaproteobacteria</taxon>
        <taxon>Enterobacterales</taxon>
        <taxon>Enterobacteriaceae</taxon>
        <taxon>Salmonella</taxon>
    </lineage>
</organism>
<comment type="function">
    <text evidence="1">Required for the expression of anaerobic nitric oxide (NO) reductase, acts as a transcriptional activator for at least the norVW operon. Activation also requires sigma-54.</text>
</comment>
<comment type="pathway">
    <text evidence="1">Nitrogen metabolism; nitric oxide reduction.</text>
</comment>
<name>NORR_SALPB</name>
<keyword id="KW-0067">ATP-binding</keyword>
<keyword id="KW-0238">DNA-binding</keyword>
<keyword id="KW-0547">Nucleotide-binding</keyword>
<keyword id="KW-0597">Phosphoprotein</keyword>
<keyword id="KW-0804">Transcription</keyword>
<keyword id="KW-0805">Transcription regulation</keyword>
<proteinExistence type="inferred from homology"/>
<accession>A9N0D7</accession>
<sequence>MSFSVEVLAGIAIELQRGIGHQDRFQRLITTLRQVLACDASALLRYESRQFIPLAIDGLAQDVLGRRFTLEGHPRLEAIARAGDVVRFPADSDLPDPYDGLIPGQESLKVHACVGLPLFAGQNLIGALTLDAMTPEQFEVFSDEELRLVAALAAGALSNALLIEQLESQNMLPGSSGVFEPIKETHMIGLSPAMTQLKKEIEIVAGSDLNVLIGGETGTGKELVAKAIHQGSPRAVNPLVYLNCAALPESVAESELFGHVKGAFTGAISNRSGKFEMADNGTLFLDEIGELSLALQAKLLRVLQYGDIQRVGDDRSLRVDVRVLAATNRDLREEVLAGRFRADLFHRLSVFPLFVPPLRERGDDVVLLAGYFCEQCRLRLGLSRVVLSPGARRHLLNYGWPGNVRELEHAIHRAVVLARATRAGDEVVLEEQHFALSEDVLPAPSAESFLALPACRNLRESTENFQREMIRQALAQNNHNWAASARALETDVANLHRLAKRLGLKD</sequence>
<feature type="chain" id="PRO_1000086224" description="Anaerobic nitric oxide reductase transcription regulator NorR">
    <location>
        <begin position="1"/>
        <end position="506"/>
    </location>
</feature>
<feature type="domain" description="Sigma-54 factor interaction" evidence="1">
    <location>
        <begin position="187"/>
        <end position="416"/>
    </location>
</feature>
<feature type="DNA-binding region" description="H-T-H motif" evidence="1">
    <location>
        <begin position="481"/>
        <end position="500"/>
    </location>
</feature>
<feature type="binding site" evidence="1">
    <location>
        <begin position="215"/>
        <end position="222"/>
    </location>
    <ligand>
        <name>ATP</name>
        <dbReference type="ChEBI" id="CHEBI:30616"/>
    </ligand>
</feature>
<feature type="binding site" evidence="1">
    <location>
        <begin position="278"/>
        <end position="287"/>
    </location>
    <ligand>
        <name>ATP</name>
        <dbReference type="ChEBI" id="CHEBI:30616"/>
    </ligand>
</feature>
<feature type="modified residue" description="4-aspartylphosphate" evidence="1">
    <location>
        <position position="57"/>
    </location>
</feature>
<evidence type="ECO:0000255" key="1">
    <source>
        <dbReference type="HAMAP-Rule" id="MF_01314"/>
    </source>
</evidence>
<protein>
    <recommendedName>
        <fullName evidence="1">Anaerobic nitric oxide reductase transcription regulator NorR</fullName>
    </recommendedName>
</protein>